<accession>Q8TF74</accession>
<accession>A8K0L3</accession>
<accession>Q658J8</accession>
<accession>Q71RE1</accession>
<accession>Q8TE44</accession>
<name>WIPF2_HUMAN</name>
<proteinExistence type="evidence at protein level"/>
<feature type="chain" id="PRO_0000065975" description="WAS/WASL-interacting protein family member 2">
    <location>
        <begin position="1"/>
        <end position="440"/>
    </location>
</feature>
<feature type="domain" description="WH2" evidence="3">
    <location>
        <begin position="36"/>
        <end position="53"/>
    </location>
</feature>
<feature type="region of interest" description="Disordered" evidence="4">
    <location>
        <begin position="1"/>
        <end position="36"/>
    </location>
</feature>
<feature type="region of interest" description="Binds actin" evidence="2">
    <location>
        <begin position="49"/>
        <end position="52"/>
    </location>
</feature>
<feature type="region of interest" description="Disordered" evidence="4">
    <location>
        <begin position="56"/>
        <end position="387"/>
    </location>
</feature>
<feature type="region of interest" description="Disordered" evidence="4">
    <location>
        <begin position="419"/>
        <end position="440"/>
    </location>
</feature>
<feature type="compositionally biased region" description="Pro residues" evidence="4">
    <location>
        <begin position="1"/>
        <end position="18"/>
    </location>
</feature>
<feature type="compositionally biased region" description="Low complexity" evidence="4">
    <location>
        <begin position="116"/>
        <end position="133"/>
    </location>
</feature>
<feature type="compositionally biased region" description="Polar residues" evidence="4">
    <location>
        <begin position="161"/>
        <end position="172"/>
    </location>
</feature>
<feature type="compositionally biased region" description="Pro residues" evidence="4">
    <location>
        <begin position="176"/>
        <end position="193"/>
    </location>
</feature>
<feature type="compositionally biased region" description="Pro residues" evidence="4">
    <location>
        <begin position="222"/>
        <end position="236"/>
    </location>
</feature>
<feature type="compositionally biased region" description="Pro residues" evidence="4">
    <location>
        <begin position="249"/>
        <end position="262"/>
    </location>
</feature>
<feature type="compositionally biased region" description="Pro residues" evidence="4">
    <location>
        <begin position="356"/>
        <end position="378"/>
    </location>
</feature>
<feature type="modified residue" description="Asymmetric dimethylarginine" evidence="1">
    <location>
        <position position="37"/>
    </location>
</feature>
<feature type="splice variant" id="VSP_012967" description="In isoform 2." evidence="7">
    <location>
        <begin position="1"/>
        <end position="150"/>
    </location>
</feature>
<feature type="sequence conflict" description="In Ref. 2; CAD24007." evidence="8" ref="2">
    <original>Q</original>
    <variation>H</variation>
    <location>
        <position position="82"/>
    </location>
</feature>
<keyword id="KW-0009">Actin-binding</keyword>
<keyword id="KW-0025">Alternative splicing</keyword>
<keyword id="KW-0963">Cytoplasm</keyword>
<keyword id="KW-0206">Cytoskeleton</keyword>
<keyword id="KW-0488">Methylation</keyword>
<keyword id="KW-1267">Proteomics identification</keyword>
<keyword id="KW-1185">Reference proteome</keyword>
<organism>
    <name type="scientific">Homo sapiens</name>
    <name type="common">Human</name>
    <dbReference type="NCBI Taxonomy" id="9606"/>
    <lineage>
        <taxon>Eukaryota</taxon>
        <taxon>Metazoa</taxon>
        <taxon>Chordata</taxon>
        <taxon>Craniata</taxon>
        <taxon>Vertebrata</taxon>
        <taxon>Euteleostomi</taxon>
        <taxon>Mammalia</taxon>
        <taxon>Eutheria</taxon>
        <taxon>Euarchontoglires</taxon>
        <taxon>Primates</taxon>
        <taxon>Haplorrhini</taxon>
        <taxon>Catarrhini</taxon>
        <taxon>Hominidae</taxon>
        <taxon>Homo</taxon>
    </lineage>
</organism>
<protein>
    <recommendedName>
        <fullName>WAS/WASL-interacting protein family member 2</fullName>
    </recommendedName>
    <alternativeName>
        <fullName>WASP-interacting protein-related protein</fullName>
    </alternativeName>
    <alternativeName>
        <fullName>WIP- and CR16-homologous protein</fullName>
    </alternativeName>
    <alternativeName>
        <fullName>WIP-related protein</fullName>
    </alternativeName>
</protein>
<evidence type="ECO:0000250" key="1">
    <source>
        <dbReference type="UniProtKB" id="Q6PEV3"/>
    </source>
</evidence>
<evidence type="ECO:0000255" key="2"/>
<evidence type="ECO:0000255" key="3">
    <source>
        <dbReference type="PROSITE-ProRule" id="PRU00406"/>
    </source>
</evidence>
<evidence type="ECO:0000256" key="4">
    <source>
        <dbReference type="SAM" id="MobiDB-lite"/>
    </source>
</evidence>
<evidence type="ECO:0000269" key="5">
    <source>
    </source>
</evidence>
<evidence type="ECO:0000269" key="6">
    <source>
    </source>
</evidence>
<evidence type="ECO:0000303" key="7">
    <source>
    </source>
</evidence>
<evidence type="ECO:0000305" key="8"/>
<comment type="function">
    <text evidence="5 6">Plays an active role in the formation of cell surface protrusions downstream of activated PDGFB receptors. Plays an important role in actin-microspike formation through cooperation with WASL. May cooperate with WASP and WASL to induce mobilization and reorganization of the actin filament system.</text>
</comment>
<comment type="subunit">
    <text evidence="5 6">Interacts with WASL and WASP, and this interaction results in cytoplasmic relocation of these two proteins along actin filaments. Interacts with NCK2 resulting in the localization to sites of focal adhesions. No interaction was seen with WASF2 and WASF3.</text>
</comment>
<comment type="interaction">
    <interactant intactId="EBI-2850112">
        <id>Q8TF74</id>
    </interactant>
    <interactant intactId="EBI-401755">
        <id>P62993</id>
        <label>GRB2</label>
    </interactant>
    <organismsDiffer>false</organismsDiffer>
    <experiments>7</experiments>
</comment>
<comment type="interaction">
    <interactant intactId="EBI-2850112">
        <id>Q8TF74</id>
    </interactant>
    <interactant intactId="EBI-741237">
        <id>O60504</id>
        <label>SORBS3</label>
    </interactant>
    <organismsDiffer>false</organismsDiffer>
    <experiments>3</experiments>
</comment>
<comment type="interaction">
    <interactant intactId="EBI-2850112">
        <id>Q8TF74</id>
    </interactant>
    <interactant intactId="EBI-13296313">
        <id>A6NH52</id>
        <label>TVP23A</label>
    </interactant>
    <organismsDiffer>false</organismsDiffer>
    <experiments>3</experiments>
</comment>
<comment type="interaction">
    <interactant intactId="EBI-2850112">
        <id>Q8TF74</id>
    </interactant>
    <interactant intactId="EBI-957615">
        <id>O00401</id>
        <label>WASL</label>
    </interactant>
    <organismsDiffer>false</organismsDiffer>
    <experiments>8</experiments>
</comment>
<comment type="subcellular location">
    <subcellularLocation>
        <location evidence="5 6">Cytoplasm</location>
        <location evidence="5 6">Cytoskeleton</location>
    </subcellularLocation>
    <text>Localized to stress fibers and bundles of actin filaments.</text>
</comment>
<comment type="alternative products">
    <event type="alternative splicing"/>
    <isoform>
        <id>Q8TF74-1</id>
        <name>1</name>
        <sequence type="displayed"/>
    </isoform>
    <isoform>
        <id>Q8TF74-2</id>
        <name>2</name>
        <sequence type="described" ref="VSP_012967"/>
    </isoform>
</comment>
<comment type="tissue specificity">
    <text evidence="5 6">Expressed mainly in brain, colon, lung and stomach (at protein level). Ubiquitously expressed, with high expression in brain, kidney, lung, and placenta.</text>
</comment>
<comment type="miscellaneous">
    <text>Access to the profilin-binding site is masked in the full-length protein.</text>
</comment>
<comment type="similarity">
    <text evidence="8">Belongs to the verprolin family.</text>
</comment>
<comment type="sequence caution" evidence="8">
    <conflict type="frameshift">
        <sequence resource="EMBL-CDS" id="AAQ15232"/>
    </conflict>
</comment>
<dbReference type="EMBL" id="AB043786">
    <property type="protein sequence ID" value="BAB85113.1"/>
    <property type="molecule type" value="mRNA"/>
</dbReference>
<dbReference type="EMBL" id="AJ431177">
    <property type="protein sequence ID" value="CAD24007.1"/>
    <property type="molecule type" value="mRNA"/>
</dbReference>
<dbReference type="EMBL" id="AF370396">
    <property type="protein sequence ID" value="AAQ15232.1"/>
    <property type="status" value="ALT_FRAME"/>
    <property type="molecule type" value="mRNA"/>
</dbReference>
<dbReference type="EMBL" id="AK289578">
    <property type="protein sequence ID" value="BAF82267.1"/>
    <property type="molecule type" value="mRNA"/>
</dbReference>
<dbReference type="EMBL" id="AK289779">
    <property type="protein sequence ID" value="BAF82468.1"/>
    <property type="molecule type" value="mRNA"/>
</dbReference>
<dbReference type="EMBL" id="AK290301">
    <property type="protein sequence ID" value="BAF82990.1"/>
    <property type="molecule type" value="mRNA"/>
</dbReference>
<dbReference type="EMBL" id="AK315836">
    <property type="protein sequence ID" value="BAF98727.1"/>
    <property type="molecule type" value="mRNA"/>
</dbReference>
<dbReference type="EMBL" id="AL834239">
    <property type="protein sequence ID" value="CAH56360.1"/>
    <property type="molecule type" value="mRNA"/>
</dbReference>
<dbReference type="EMBL" id="BC065551">
    <property type="protein sequence ID" value="AAH65551.1"/>
    <property type="molecule type" value="mRNA"/>
</dbReference>
<dbReference type="CCDS" id="CCDS11364.1">
    <molecule id="Q8TF74-1"/>
</dbReference>
<dbReference type="PIR" id="JC7807">
    <property type="entry name" value="JC7807"/>
</dbReference>
<dbReference type="RefSeq" id="NP_573571.1">
    <molecule id="Q8TF74-1"/>
    <property type="nucleotide sequence ID" value="NM_133264.5"/>
</dbReference>
<dbReference type="RefSeq" id="XP_005257140.1">
    <molecule id="Q8TF74-1"/>
    <property type="nucleotide sequence ID" value="XM_005257083.3"/>
</dbReference>
<dbReference type="RefSeq" id="XP_005257141.1">
    <molecule id="Q8TF74-1"/>
    <property type="nucleotide sequence ID" value="XM_005257084.3"/>
</dbReference>
<dbReference type="RefSeq" id="XP_011522715.1">
    <property type="nucleotide sequence ID" value="XM_011524413.1"/>
</dbReference>
<dbReference type="RefSeq" id="XP_047291452.1">
    <molecule id="Q8TF74-1"/>
    <property type="nucleotide sequence ID" value="XM_047435496.1"/>
</dbReference>
<dbReference type="RefSeq" id="XP_047291453.1">
    <molecule id="Q8TF74-1"/>
    <property type="nucleotide sequence ID" value="XM_047435497.1"/>
</dbReference>
<dbReference type="RefSeq" id="XP_047291456.1">
    <molecule id="Q8TF74-2"/>
    <property type="nucleotide sequence ID" value="XM_047435500.1"/>
</dbReference>
<dbReference type="SMR" id="Q8TF74"/>
<dbReference type="BioGRID" id="127043">
    <property type="interactions" value="44"/>
</dbReference>
<dbReference type="ELM" id="Q8TF74"/>
<dbReference type="FunCoup" id="Q8TF74">
    <property type="interactions" value="1517"/>
</dbReference>
<dbReference type="IntAct" id="Q8TF74">
    <property type="interactions" value="17"/>
</dbReference>
<dbReference type="MINT" id="Q8TF74"/>
<dbReference type="STRING" id="9606.ENSP00000320924"/>
<dbReference type="GlyCosmos" id="Q8TF74">
    <property type="glycosylation" value="1 site, 1 glycan"/>
</dbReference>
<dbReference type="GlyGen" id="Q8TF74">
    <property type="glycosylation" value="8 sites, 1 N-linked glycan (1 site), 1 O-linked glycan (5 sites)"/>
</dbReference>
<dbReference type="iPTMnet" id="Q8TF74"/>
<dbReference type="PhosphoSitePlus" id="Q8TF74"/>
<dbReference type="BioMuta" id="WIPF2"/>
<dbReference type="DMDM" id="60390855"/>
<dbReference type="jPOST" id="Q8TF74"/>
<dbReference type="MassIVE" id="Q8TF74"/>
<dbReference type="PaxDb" id="9606-ENSP00000320924"/>
<dbReference type="PeptideAtlas" id="Q8TF74"/>
<dbReference type="ProteomicsDB" id="74574">
    <molecule id="Q8TF74-1"/>
</dbReference>
<dbReference type="ProteomicsDB" id="74575">
    <molecule id="Q8TF74-2"/>
</dbReference>
<dbReference type="Pumba" id="Q8TF74"/>
<dbReference type="Antibodypedia" id="16452">
    <property type="antibodies" value="154 antibodies from 26 providers"/>
</dbReference>
<dbReference type="DNASU" id="147179"/>
<dbReference type="Ensembl" id="ENST00000323571.9">
    <molecule id="Q8TF74-1"/>
    <property type="protein sequence ID" value="ENSP00000320924.4"/>
    <property type="gene ID" value="ENSG00000171475.14"/>
</dbReference>
<dbReference type="Ensembl" id="ENST00000583130.5">
    <molecule id="Q8TF74-1"/>
    <property type="protein sequence ID" value="ENSP00000462350.1"/>
    <property type="gene ID" value="ENSG00000171475.14"/>
</dbReference>
<dbReference type="Ensembl" id="ENST00000585043.5">
    <molecule id="Q8TF74-1"/>
    <property type="protein sequence ID" value="ENSP00000462826.1"/>
    <property type="gene ID" value="ENSG00000171475.14"/>
</dbReference>
<dbReference type="GeneID" id="147179"/>
<dbReference type="KEGG" id="hsa:147179"/>
<dbReference type="MANE-Select" id="ENST00000323571.9">
    <property type="protein sequence ID" value="ENSP00000320924.4"/>
    <property type="RefSeq nucleotide sequence ID" value="NM_133264.5"/>
    <property type="RefSeq protein sequence ID" value="NP_573571.1"/>
</dbReference>
<dbReference type="UCSC" id="uc002hug.2">
    <molecule id="Q8TF74-1"/>
    <property type="organism name" value="human"/>
</dbReference>
<dbReference type="AGR" id="HGNC:30923"/>
<dbReference type="CTD" id="147179"/>
<dbReference type="DisGeNET" id="147179"/>
<dbReference type="GeneCards" id="WIPF2"/>
<dbReference type="HGNC" id="HGNC:30923">
    <property type="gene designation" value="WIPF2"/>
</dbReference>
<dbReference type="HPA" id="ENSG00000171475">
    <property type="expression patterns" value="Low tissue specificity"/>
</dbReference>
<dbReference type="MIM" id="609692">
    <property type="type" value="gene"/>
</dbReference>
<dbReference type="neXtProt" id="NX_Q8TF74"/>
<dbReference type="OpenTargets" id="ENSG00000171475"/>
<dbReference type="PharmGKB" id="PA162409210"/>
<dbReference type="VEuPathDB" id="HostDB:ENSG00000171475"/>
<dbReference type="eggNOG" id="KOG4462">
    <property type="taxonomic scope" value="Eukaryota"/>
</dbReference>
<dbReference type="GeneTree" id="ENSGT00940000155557"/>
<dbReference type="HOGENOM" id="CLU_039513_0_0_1"/>
<dbReference type="InParanoid" id="Q8TF74"/>
<dbReference type="OMA" id="DNTDCSA"/>
<dbReference type="OrthoDB" id="5877983at2759"/>
<dbReference type="PAN-GO" id="Q8TF74">
    <property type="GO annotations" value="2 GO annotations based on evolutionary models"/>
</dbReference>
<dbReference type="PhylomeDB" id="Q8TF74"/>
<dbReference type="TreeFam" id="TF332135"/>
<dbReference type="PathwayCommons" id="Q8TF74"/>
<dbReference type="Reactome" id="R-HSA-2029482">
    <property type="pathway name" value="Regulation of actin dynamics for phagocytic cup formation"/>
</dbReference>
<dbReference type="Reactome" id="R-HSA-5663213">
    <property type="pathway name" value="RHO GTPases Activate WASPs and WAVEs"/>
</dbReference>
<dbReference type="Reactome" id="R-HSA-9013148">
    <property type="pathway name" value="CDC42 GTPase cycle"/>
</dbReference>
<dbReference type="Reactome" id="R-HSA-9013149">
    <property type="pathway name" value="RAC1 GTPase cycle"/>
</dbReference>
<dbReference type="Reactome" id="R-HSA-9013409">
    <property type="pathway name" value="RHOJ GTPase cycle"/>
</dbReference>
<dbReference type="Reactome" id="R-HSA-9664422">
    <property type="pathway name" value="FCGR3A-mediated phagocytosis"/>
</dbReference>
<dbReference type="SignaLink" id="Q8TF74"/>
<dbReference type="BioGRID-ORCS" id="147179">
    <property type="hits" value="13 hits in 1159 CRISPR screens"/>
</dbReference>
<dbReference type="CD-CODE" id="FB4E32DD">
    <property type="entry name" value="Presynaptic clusters and postsynaptic densities"/>
</dbReference>
<dbReference type="ChiTaRS" id="WIPF2">
    <property type="organism name" value="human"/>
</dbReference>
<dbReference type="GeneWiki" id="WIPF2"/>
<dbReference type="GenomeRNAi" id="147179"/>
<dbReference type="Pharos" id="Q8TF74">
    <property type="development level" value="Tbio"/>
</dbReference>
<dbReference type="PRO" id="PR:Q8TF74"/>
<dbReference type="Proteomes" id="UP000005640">
    <property type="component" value="Chromosome 17"/>
</dbReference>
<dbReference type="RNAct" id="Q8TF74">
    <property type="molecule type" value="protein"/>
</dbReference>
<dbReference type="Bgee" id="ENSG00000171475">
    <property type="expression patterns" value="Expressed in secondary oocyte and 213 other cell types or tissues"/>
</dbReference>
<dbReference type="ExpressionAtlas" id="Q8TF74">
    <property type="expression patterns" value="baseline and differential"/>
</dbReference>
<dbReference type="GO" id="GO:0005856">
    <property type="term" value="C:cytoskeleton"/>
    <property type="evidence" value="ECO:0007669"/>
    <property type="project" value="UniProtKB-SubCell"/>
</dbReference>
<dbReference type="GO" id="GO:0005829">
    <property type="term" value="C:cytosol"/>
    <property type="evidence" value="ECO:0000304"/>
    <property type="project" value="Reactome"/>
</dbReference>
<dbReference type="GO" id="GO:0003779">
    <property type="term" value="F:actin binding"/>
    <property type="evidence" value="ECO:0007669"/>
    <property type="project" value="UniProtKB-KW"/>
</dbReference>
<dbReference type="CDD" id="cd22077">
    <property type="entry name" value="WH2_WAS_WASL-2_3"/>
    <property type="match status" value="1"/>
</dbReference>
<dbReference type="InterPro" id="IPR003124">
    <property type="entry name" value="WH2_dom"/>
</dbReference>
<dbReference type="Pfam" id="PF02205">
    <property type="entry name" value="WH2"/>
    <property type="match status" value="1"/>
</dbReference>
<dbReference type="SMART" id="SM00246">
    <property type="entry name" value="WH2"/>
    <property type="match status" value="1"/>
</dbReference>
<dbReference type="PROSITE" id="PS51082">
    <property type="entry name" value="WH2"/>
    <property type="match status" value="1"/>
</dbReference>
<gene>
    <name type="primary">WIPF2</name>
    <name type="synonym">WICH</name>
    <name type="synonym">WIRE</name>
    <name type="ORF">PP10631</name>
</gene>
<sequence length="440" mass="46289">MPIPPPPPPPPGPPPPPTFHQANTEQPKLSRDEQRGRGALLQDICKGTKLKKVTNINDRSAPILEKPKGSSGGYGSGGAALQPKGGLFQGGVLKLRPVGAKDGSENLAGKPALQIPSSRAAAPRPPVSAASGRPQDDTDSSRASLPELPRMQRPSLPDLSRPNTTSSTGMKHSSSAPPPPPPGRRANAPPTPLPMHSSKAPAYNREKPLPPTPGQRLHPGREGPPAPPPVKPPPSPVNIRTGPSGQSLAPPPPPYRQPPGVPNGPSSPTNESAPELPQRHNSLHRKTPGPVRGLAPPPPTSASPSLLSNRPPPPARDPPSRGAAPPPPPPVIRNGARDAPPPPPPYRMHGSEPPSRGKPPPPPSRTPAGPPPPPPPPLRNGHRDSITTVRSFLDDFESKYSFHPVEDFPAPEEYKHFQRIYPSKTNRAARGAPPLPPILR</sequence>
<reference key="1">
    <citation type="journal article" date="2002" name="Biochem. Biophys. Res. Commun.">
        <title>WICH, a novel verprolin homology domain-containing protein that functions cooperatively with N-WASP in actin-microspike formation.</title>
        <authorList>
            <person name="Kato M."/>
            <person name="Miki H."/>
            <person name="Kurita S."/>
            <person name="Endo T."/>
            <person name="Nakagawa H."/>
            <person name="Miyamoto S."/>
            <person name="Takenawa T."/>
        </authorList>
    </citation>
    <scope>NUCLEOTIDE SEQUENCE [MRNA] (ISOFORM 1)</scope>
    <scope>FUNCTION</scope>
    <scope>SUBCELLULAR LOCATION</scope>
    <scope>TISSUE SPECIFICITY</scope>
    <scope>INTERACTION WITH WASL</scope>
</reference>
<reference key="2">
    <citation type="journal article" date="2002" name="Exp. Cell Res.">
        <title>The WASP-binding protein WIRE has a role in the regulation of the actin filament system downstream of the platelet-derived growth factor receptor.</title>
        <authorList>
            <person name="Aspenstroem P."/>
        </authorList>
    </citation>
    <scope>NUCLEOTIDE SEQUENCE [MRNA] (ISOFORM 1)</scope>
    <scope>FUNCTION</scope>
    <scope>SUBCELLULAR LOCATION</scope>
    <scope>TISSUE SPECIFICITY</scope>
    <scope>INTERACTION WITH WASP; WASL; NCK2 AND PFN1</scope>
</reference>
<reference key="3">
    <citation type="journal article" date="2004" name="Proc. Natl. Acad. Sci. U.S.A.">
        <title>Large-scale cDNA transfection screening for genes related to cancer development and progression.</title>
        <authorList>
            <person name="Wan D."/>
            <person name="Gong Y."/>
            <person name="Qin W."/>
            <person name="Zhang P."/>
            <person name="Li J."/>
            <person name="Wei L."/>
            <person name="Zhou X."/>
            <person name="Li H."/>
            <person name="Qiu X."/>
            <person name="Zhong F."/>
            <person name="He L."/>
            <person name="Yu J."/>
            <person name="Yao G."/>
            <person name="Jiang H."/>
            <person name="Qian L."/>
            <person name="Yu Y."/>
            <person name="Shu H."/>
            <person name="Chen X."/>
            <person name="Xu H."/>
            <person name="Guo M."/>
            <person name="Pan Z."/>
            <person name="Chen Y."/>
            <person name="Ge C."/>
            <person name="Yang S."/>
            <person name="Gu J."/>
        </authorList>
    </citation>
    <scope>NUCLEOTIDE SEQUENCE [LARGE SCALE MRNA] (ISOFORM 1)</scope>
</reference>
<reference key="4">
    <citation type="journal article" date="2004" name="Nat. Genet.">
        <title>Complete sequencing and characterization of 21,243 full-length human cDNAs.</title>
        <authorList>
            <person name="Ota T."/>
            <person name="Suzuki Y."/>
            <person name="Nishikawa T."/>
            <person name="Otsuki T."/>
            <person name="Sugiyama T."/>
            <person name="Irie R."/>
            <person name="Wakamatsu A."/>
            <person name="Hayashi K."/>
            <person name="Sato H."/>
            <person name="Nagai K."/>
            <person name="Kimura K."/>
            <person name="Makita H."/>
            <person name="Sekine M."/>
            <person name="Obayashi M."/>
            <person name="Nishi T."/>
            <person name="Shibahara T."/>
            <person name="Tanaka T."/>
            <person name="Ishii S."/>
            <person name="Yamamoto J."/>
            <person name="Saito K."/>
            <person name="Kawai Y."/>
            <person name="Isono Y."/>
            <person name="Nakamura Y."/>
            <person name="Nagahari K."/>
            <person name="Murakami K."/>
            <person name="Yasuda T."/>
            <person name="Iwayanagi T."/>
            <person name="Wagatsuma M."/>
            <person name="Shiratori A."/>
            <person name="Sudo H."/>
            <person name="Hosoiri T."/>
            <person name="Kaku Y."/>
            <person name="Kodaira H."/>
            <person name="Kondo H."/>
            <person name="Sugawara M."/>
            <person name="Takahashi M."/>
            <person name="Kanda K."/>
            <person name="Yokoi T."/>
            <person name="Furuya T."/>
            <person name="Kikkawa E."/>
            <person name="Omura Y."/>
            <person name="Abe K."/>
            <person name="Kamihara K."/>
            <person name="Katsuta N."/>
            <person name="Sato K."/>
            <person name="Tanikawa M."/>
            <person name="Yamazaki M."/>
            <person name="Ninomiya K."/>
            <person name="Ishibashi T."/>
            <person name="Yamashita H."/>
            <person name="Murakawa K."/>
            <person name="Fujimori K."/>
            <person name="Tanai H."/>
            <person name="Kimata M."/>
            <person name="Watanabe M."/>
            <person name="Hiraoka S."/>
            <person name="Chiba Y."/>
            <person name="Ishida S."/>
            <person name="Ono Y."/>
            <person name="Takiguchi S."/>
            <person name="Watanabe S."/>
            <person name="Yosida M."/>
            <person name="Hotuta T."/>
            <person name="Kusano J."/>
            <person name="Kanehori K."/>
            <person name="Takahashi-Fujii A."/>
            <person name="Hara H."/>
            <person name="Tanase T.-O."/>
            <person name="Nomura Y."/>
            <person name="Togiya S."/>
            <person name="Komai F."/>
            <person name="Hara R."/>
            <person name="Takeuchi K."/>
            <person name="Arita M."/>
            <person name="Imose N."/>
            <person name="Musashino K."/>
            <person name="Yuuki H."/>
            <person name="Oshima A."/>
            <person name="Sasaki N."/>
            <person name="Aotsuka S."/>
            <person name="Yoshikawa Y."/>
            <person name="Matsunawa H."/>
            <person name="Ichihara T."/>
            <person name="Shiohata N."/>
            <person name="Sano S."/>
            <person name="Moriya S."/>
            <person name="Momiyama H."/>
            <person name="Satoh N."/>
            <person name="Takami S."/>
            <person name="Terashima Y."/>
            <person name="Suzuki O."/>
            <person name="Nakagawa S."/>
            <person name="Senoh A."/>
            <person name="Mizoguchi H."/>
            <person name="Goto Y."/>
            <person name="Shimizu F."/>
            <person name="Wakebe H."/>
            <person name="Hishigaki H."/>
            <person name="Watanabe T."/>
            <person name="Sugiyama A."/>
            <person name="Takemoto M."/>
            <person name="Kawakami B."/>
            <person name="Yamazaki M."/>
            <person name="Watanabe K."/>
            <person name="Kumagai A."/>
            <person name="Itakura S."/>
            <person name="Fukuzumi Y."/>
            <person name="Fujimori Y."/>
            <person name="Komiyama M."/>
            <person name="Tashiro H."/>
            <person name="Tanigami A."/>
            <person name="Fujiwara T."/>
            <person name="Ono T."/>
            <person name="Yamada K."/>
            <person name="Fujii Y."/>
            <person name="Ozaki K."/>
            <person name="Hirao M."/>
            <person name="Ohmori Y."/>
            <person name="Kawabata A."/>
            <person name="Hikiji T."/>
            <person name="Kobatake N."/>
            <person name="Inagaki H."/>
            <person name="Ikema Y."/>
            <person name="Okamoto S."/>
            <person name="Okitani R."/>
            <person name="Kawakami T."/>
            <person name="Noguchi S."/>
            <person name="Itoh T."/>
            <person name="Shigeta K."/>
            <person name="Senba T."/>
            <person name="Matsumura K."/>
            <person name="Nakajima Y."/>
            <person name="Mizuno T."/>
            <person name="Morinaga M."/>
            <person name="Sasaki M."/>
            <person name="Togashi T."/>
            <person name="Oyama M."/>
            <person name="Hata H."/>
            <person name="Watanabe M."/>
            <person name="Komatsu T."/>
            <person name="Mizushima-Sugano J."/>
            <person name="Satoh T."/>
            <person name="Shirai Y."/>
            <person name="Takahashi Y."/>
            <person name="Nakagawa K."/>
            <person name="Okumura K."/>
            <person name="Nagase T."/>
            <person name="Nomura N."/>
            <person name="Kikuchi H."/>
            <person name="Masuho Y."/>
            <person name="Yamashita R."/>
            <person name="Nakai K."/>
            <person name="Yada T."/>
            <person name="Nakamura Y."/>
            <person name="Ohara O."/>
            <person name="Isogai T."/>
            <person name="Sugano S."/>
        </authorList>
    </citation>
    <scope>NUCLEOTIDE SEQUENCE [LARGE SCALE MRNA] (ISOFORM 1)</scope>
    <source>
        <tissue>Brain</tissue>
        <tissue>Cerebellum</tissue>
        <tissue>Placenta</tissue>
        <tissue>Tongue</tissue>
    </source>
</reference>
<reference key="5">
    <citation type="journal article" date="2007" name="BMC Genomics">
        <title>The full-ORF clone resource of the German cDNA consortium.</title>
        <authorList>
            <person name="Bechtel S."/>
            <person name="Rosenfelder H."/>
            <person name="Duda A."/>
            <person name="Schmidt C.P."/>
            <person name="Ernst U."/>
            <person name="Wellenreuther R."/>
            <person name="Mehrle A."/>
            <person name="Schuster C."/>
            <person name="Bahr A."/>
            <person name="Bloecker H."/>
            <person name="Heubner D."/>
            <person name="Hoerlein A."/>
            <person name="Michel G."/>
            <person name="Wedler H."/>
            <person name="Koehrer K."/>
            <person name="Ottenwaelder B."/>
            <person name="Poustka A."/>
            <person name="Wiemann S."/>
            <person name="Schupp I."/>
        </authorList>
    </citation>
    <scope>NUCLEOTIDE SEQUENCE [LARGE SCALE MRNA] (ISOFORM 2)</scope>
    <source>
        <tissue>Brain</tissue>
    </source>
</reference>
<reference key="6">
    <citation type="journal article" date="2004" name="Genome Res.">
        <title>The status, quality, and expansion of the NIH full-length cDNA project: the Mammalian Gene Collection (MGC).</title>
        <authorList>
            <consortium name="The MGC Project Team"/>
        </authorList>
    </citation>
    <scope>NUCLEOTIDE SEQUENCE [LARGE SCALE MRNA] (ISOFORM 1)</scope>
    <source>
        <tissue>Testis</tissue>
    </source>
</reference>
<reference key="7">
    <citation type="journal article" date="2008" name="Proc. Natl. Acad. Sci. U.S.A.">
        <title>A quantitative atlas of mitotic phosphorylation.</title>
        <authorList>
            <person name="Dephoure N."/>
            <person name="Zhou C."/>
            <person name="Villen J."/>
            <person name="Beausoleil S.A."/>
            <person name="Bakalarski C.E."/>
            <person name="Elledge S.J."/>
            <person name="Gygi S.P."/>
        </authorList>
    </citation>
    <scope>IDENTIFICATION BY MASS SPECTROMETRY [LARGE SCALE ANALYSIS]</scope>
    <source>
        <tissue>Cervix carcinoma</tissue>
    </source>
</reference>
<reference key="8">
    <citation type="journal article" date="2013" name="J. Proteome Res.">
        <title>Toward a comprehensive characterization of a human cancer cell phosphoproteome.</title>
        <authorList>
            <person name="Zhou H."/>
            <person name="Di Palma S."/>
            <person name="Preisinger C."/>
            <person name="Peng M."/>
            <person name="Polat A.N."/>
            <person name="Heck A.J."/>
            <person name="Mohammed S."/>
        </authorList>
    </citation>
    <scope>IDENTIFICATION BY MASS SPECTROMETRY [LARGE SCALE ANALYSIS]</scope>
    <source>
        <tissue>Cervix carcinoma</tissue>
        <tissue>Erythroleukemia</tissue>
    </source>
</reference>